<sequence length="352" mass="39788">MKEQLNQLSAYQPGLSPRALKEKYGIEGDLYKLASNENLYGPSPKVKEAISAHLDELYYYPETGSPTLKAAISKHLNVDQSRILFGAGLDEVILMISRAVLTPGDTIVTSEATFGQYYHNAIVESANVIQVPLKDGGFDLEGILKEVNEDTSLVWLCNPNNPTGTYFNHESLDSFLSQVPPHVPVIIDEAYFEFVTAEDYPDTLALQQKYDNAFLLRTFSKAYGLAGLRVGYVVASEHAIEKWNIIRPPFNVTRISEYAAVAALEDQQYLKEVTHKNSVERERFYQLPQSEYFLPSQTNFIFVKTKRVNELYEALLNVGCITRPFPTGVRITIGFKEQNDKMLEVLSNFKYE</sequence>
<name>HIS8_STAAE</name>
<evidence type="ECO:0000255" key="1">
    <source>
        <dbReference type="HAMAP-Rule" id="MF_01023"/>
    </source>
</evidence>
<protein>
    <recommendedName>
        <fullName evidence="1">Histidinol-phosphate aminotransferase</fullName>
        <ecNumber evidence="1">2.6.1.9</ecNumber>
    </recommendedName>
    <alternativeName>
        <fullName evidence="1">Imidazole acetol-phosphate transaminase</fullName>
    </alternativeName>
</protein>
<dbReference type="EC" id="2.6.1.9" evidence="1"/>
<dbReference type="EMBL" id="AP009351">
    <property type="protein sequence ID" value="BAF66964.1"/>
    <property type="molecule type" value="Genomic_DNA"/>
</dbReference>
<dbReference type="RefSeq" id="WP_000663030.1">
    <property type="nucleotide sequence ID" value="NZ_JBBIAE010000002.1"/>
</dbReference>
<dbReference type="SMR" id="A6QF32"/>
<dbReference type="KEGG" id="sae:NWMN_0692"/>
<dbReference type="HOGENOM" id="CLU_017584_3_3_9"/>
<dbReference type="UniPathway" id="UPA00031">
    <property type="reaction ID" value="UER00012"/>
</dbReference>
<dbReference type="Proteomes" id="UP000006386">
    <property type="component" value="Chromosome"/>
</dbReference>
<dbReference type="GO" id="GO:0004400">
    <property type="term" value="F:histidinol-phosphate transaminase activity"/>
    <property type="evidence" value="ECO:0007669"/>
    <property type="project" value="UniProtKB-UniRule"/>
</dbReference>
<dbReference type="GO" id="GO:0030170">
    <property type="term" value="F:pyridoxal phosphate binding"/>
    <property type="evidence" value="ECO:0007669"/>
    <property type="project" value="InterPro"/>
</dbReference>
<dbReference type="GO" id="GO:0000105">
    <property type="term" value="P:L-histidine biosynthetic process"/>
    <property type="evidence" value="ECO:0007669"/>
    <property type="project" value="UniProtKB-UniRule"/>
</dbReference>
<dbReference type="CDD" id="cd00609">
    <property type="entry name" value="AAT_like"/>
    <property type="match status" value="1"/>
</dbReference>
<dbReference type="Gene3D" id="3.90.1150.10">
    <property type="entry name" value="Aspartate Aminotransferase, domain 1"/>
    <property type="match status" value="1"/>
</dbReference>
<dbReference type="Gene3D" id="3.40.640.10">
    <property type="entry name" value="Type I PLP-dependent aspartate aminotransferase-like (Major domain)"/>
    <property type="match status" value="1"/>
</dbReference>
<dbReference type="HAMAP" id="MF_01023">
    <property type="entry name" value="HisC_aminotrans_2"/>
    <property type="match status" value="1"/>
</dbReference>
<dbReference type="InterPro" id="IPR001917">
    <property type="entry name" value="Aminotrans_II_pyridoxalP_BS"/>
</dbReference>
<dbReference type="InterPro" id="IPR004839">
    <property type="entry name" value="Aminotransferase_I/II_large"/>
</dbReference>
<dbReference type="InterPro" id="IPR005861">
    <property type="entry name" value="HisP_aminotrans"/>
</dbReference>
<dbReference type="InterPro" id="IPR050106">
    <property type="entry name" value="HistidinolP_aminotransfase"/>
</dbReference>
<dbReference type="InterPro" id="IPR015424">
    <property type="entry name" value="PyrdxlP-dep_Trfase"/>
</dbReference>
<dbReference type="InterPro" id="IPR015421">
    <property type="entry name" value="PyrdxlP-dep_Trfase_major"/>
</dbReference>
<dbReference type="InterPro" id="IPR015422">
    <property type="entry name" value="PyrdxlP-dep_Trfase_small"/>
</dbReference>
<dbReference type="NCBIfam" id="TIGR01141">
    <property type="entry name" value="hisC"/>
    <property type="match status" value="1"/>
</dbReference>
<dbReference type="PANTHER" id="PTHR43643:SF3">
    <property type="entry name" value="HISTIDINOL-PHOSPHATE AMINOTRANSFERASE"/>
    <property type="match status" value="1"/>
</dbReference>
<dbReference type="PANTHER" id="PTHR43643">
    <property type="entry name" value="HISTIDINOL-PHOSPHATE AMINOTRANSFERASE 2"/>
    <property type="match status" value="1"/>
</dbReference>
<dbReference type="Pfam" id="PF00155">
    <property type="entry name" value="Aminotran_1_2"/>
    <property type="match status" value="1"/>
</dbReference>
<dbReference type="SUPFAM" id="SSF53383">
    <property type="entry name" value="PLP-dependent transferases"/>
    <property type="match status" value="1"/>
</dbReference>
<dbReference type="PROSITE" id="PS00599">
    <property type="entry name" value="AA_TRANSFER_CLASS_2"/>
    <property type="match status" value="1"/>
</dbReference>
<reference key="1">
    <citation type="journal article" date="2008" name="J. Bacteriol.">
        <title>Genome sequence of Staphylococcus aureus strain Newman and comparative analysis of staphylococcal genomes: polymorphism and evolution of two major pathogenicity islands.</title>
        <authorList>
            <person name="Baba T."/>
            <person name="Bae T."/>
            <person name="Schneewind O."/>
            <person name="Takeuchi F."/>
            <person name="Hiramatsu K."/>
        </authorList>
    </citation>
    <scope>NUCLEOTIDE SEQUENCE [LARGE SCALE GENOMIC DNA]</scope>
    <source>
        <strain>Newman</strain>
    </source>
</reference>
<organism>
    <name type="scientific">Staphylococcus aureus (strain Newman)</name>
    <dbReference type="NCBI Taxonomy" id="426430"/>
    <lineage>
        <taxon>Bacteria</taxon>
        <taxon>Bacillati</taxon>
        <taxon>Bacillota</taxon>
        <taxon>Bacilli</taxon>
        <taxon>Bacillales</taxon>
        <taxon>Staphylococcaceae</taxon>
        <taxon>Staphylococcus</taxon>
    </lineage>
</organism>
<proteinExistence type="inferred from homology"/>
<accession>A6QF32</accession>
<feature type="chain" id="PRO_1000072944" description="Histidinol-phosphate aminotransferase">
    <location>
        <begin position="1"/>
        <end position="352"/>
    </location>
</feature>
<feature type="modified residue" description="N6-(pyridoxal phosphate)lysine" evidence="1">
    <location>
        <position position="221"/>
    </location>
</feature>
<comment type="catalytic activity">
    <reaction evidence="1">
        <text>L-histidinol phosphate + 2-oxoglutarate = 3-(imidazol-4-yl)-2-oxopropyl phosphate + L-glutamate</text>
        <dbReference type="Rhea" id="RHEA:23744"/>
        <dbReference type="ChEBI" id="CHEBI:16810"/>
        <dbReference type="ChEBI" id="CHEBI:29985"/>
        <dbReference type="ChEBI" id="CHEBI:57766"/>
        <dbReference type="ChEBI" id="CHEBI:57980"/>
        <dbReference type="EC" id="2.6.1.9"/>
    </reaction>
</comment>
<comment type="cofactor">
    <cofactor evidence="1">
        <name>pyridoxal 5'-phosphate</name>
        <dbReference type="ChEBI" id="CHEBI:597326"/>
    </cofactor>
</comment>
<comment type="pathway">
    <text evidence="1">Amino-acid biosynthesis; L-histidine biosynthesis; L-histidine from 5-phospho-alpha-D-ribose 1-diphosphate: step 7/9.</text>
</comment>
<comment type="subunit">
    <text evidence="1">Homodimer.</text>
</comment>
<comment type="similarity">
    <text evidence="1">Belongs to the class-II pyridoxal-phosphate-dependent aminotransferase family. Histidinol-phosphate aminotransferase subfamily.</text>
</comment>
<keyword id="KW-0028">Amino-acid biosynthesis</keyword>
<keyword id="KW-0032">Aminotransferase</keyword>
<keyword id="KW-0368">Histidine biosynthesis</keyword>
<keyword id="KW-0663">Pyridoxal phosphate</keyword>
<keyword id="KW-0808">Transferase</keyword>
<gene>
    <name evidence="1" type="primary">hisC</name>
    <name type="ordered locus">NWMN_0692</name>
</gene>